<organismHost>
    <name type="scientific">Acheta domesticus</name>
    <name type="common">House cricket</name>
    <dbReference type="NCBI Taxonomy" id="6997"/>
</organismHost>
<organismHost>
    <name type="scientific">Chilo suppressalis</name>
    <name type="common">Asiatic rice borer moth</name>
    <dbReference type="NCBI Taxonomy" id="168631"/>
</organismHost>
<organismHost>
    <name type="scientific">Gryllus bimaculatus</name>
    <name type="common">Two-spotted cricket</name>
    <dbReference type="NCBI Taxonomy" id="6999"/>
</organismHost>
<organismHost>
    <name type="scientific">Gryllus campestris</name>
    <dbReference type="NCBI Taxonomy" id="58607"/>
</organismHost>
<organismHost>
    <name type="scientific">Spodoptera frugiperda</name>
    <name type="common">Fall armyworm</name>
    <dbReference type="NCBI Taxonomy" id="7108"/>
</organismHost>
<proteinExistence type="predicted"/>
<keyword id="KW-1185">Reference proteome</keyword>
<sequence>MNQNPLTSEQLNNAYFNLLTPQQKQMVADFGKNMYSDFTKYEAPKTTTSTPLNDEEEIEWLVRQIMSGLQLCDINAKGKKLLQKKYGKTWKSKLF</sequence>
<reference key="1">
    <citation type="journal article" date="2001" name="Virology">
        <title>Analysis of the first complete DNA sequence of an invertebrate iridovirus: coding strategy of the genome of Chilo iridescent virus.</title>
        <authorList>
            <person name="Jakob N.J."/>
            <person name="Mueller K."/>
            <person name="Bahr U."/>
            <person name="Darai G."/>
        </authorList>
    </citation>
    <scope>NUCLEOTIDE SEQUENCE [LARGE SCALE GENOMIC DNA]</scope>
</reference>
<reference key="2">
    <citation type="journal article" date="2007" name="Virol. J.">
        <title>Comparative genomic analysis of the family Iridoviridae: re-annotating and defining the core set of iridovirus genes.</title>
        <authorList>
            <person name="Eaton H.E."/>
            <person name="Metcalf J."/>
            <person name="Penny E."/>
            <person name="Tcherepanov V."/>
            <person name="Upton C."/>
            <person name="Brunetti C.R."/>
        </authorList>
    </citation>
    <scope>GENOME REANNOTATION</scope>
</reference>
<feature type="chain" id="PRO_0000377995" description="Uncharacterized protein 116L">
    <location>
        <begin position="1"/>
        <end position="95"/>
    </location>
</feature>
<protein>
    <recommendedName>
        <fullName>Uncharacterized protein 116L</fullName>
    </recommendedName>
</protein>
<organism>
    <name type="scientific">Invertebrate iridescent virus 6</name>
    <name type="common">IIV-6</name>
    <name type="synonym">Chilo iridescent virus</name>
    <dbReference type="NCBI Taxonomy" id="176652"/>
    <lineage>
        <taxon>Viruses</taxon>
        <taxon>Varidnaviria</taxon>
        <taxon>Bamfordvirae</taxon>
        <taxon>Nucleocytoviricota</taxon>
        <taxon>Megaviricetes</taxon>
        <taxon>Pimascovirales</taxon>
        <taxon>Iridoviridae</taxon>
        <taxon>Betairidovirinae</taxon>
        <taxon>Iridovirus</taxon>
    </lineage>
</organism>
<name>116L_IIV6</name>
<gene>
    <name type="ORF">IIV6-116L</name>
</gene>
<dbReference type="EMBL" id="AF303741">
    <property type="protein sequence ID" value="AAB94442.1"/>
    <property type="molecule type" value="Genomic_DNA"/>
</dbReference>
<dbReference type="PIR" id="T03068">
    <property type="entry name" value="T03068"/>
</dbReference>
<dbReference type="RefSeq" id="NP_149579.1">
    <property type="nucleotide sequence ID" value="NC_003038.1"/>
</dbReference>
<dbReference type="SMR" id="O55731"/>
<dbReference type="KEGG" id="vg:1733260"/>
<dbReference type="OrthoDB" id="39360at10239"/>
<dbReference type="Proteomes" id="UP000001359">
    <property type="component" value="Genome"/>
</dbReference>
<accession>O55731</accession>